<proteinExistence type="inferred from homology"/>
<comment type="function">
    <text evidence="1">Catalyzes the transfer of the diacylglyceryl group from phosphatidylglycerol to the sulfhydryl group of the N-terminal cysteine of a prolipoprotein, the first step in the formation of mature lipoproteins.</text>
</comment>
<comment type="catalytic activity">
    <reaction evidence="1">
        <text>L-cysteinyl-[prolipoprotein] + a 1,2-diacyl-sn-glycero-3-phospho-(1'-sn-glycerol) = an S-1,2-diacyl-sn-glyceryl-L-cysteinyl-[prolipoprotein] + sn-glycerol 1-phosphate + H(+)</text>
        <dbReference type="Rhea" id="RHEA:56712"/>
        <dbReference type="Rhea" id="RHEA-COMP:14679"/>
        <dbReference type="Rhea" id="RHEA-COMP:14680"/>
        <dbReference type="ChEBI" id="CHEBI:15378"/>
        <dbReference type="ChEBI" id="CHEBI:29950"/>
        <dbReference type="ChEBI" id="CHEBI:57685"/>
        <dbReference type="ChEBI" id="CHEBI:64716"/>
        <dbReference type="ChEBI" id="CHEBI:140658"/>
        <dbReference type="EC" id="2.5.1.145"/>
    </reaction>
</comment>
<comment type="pathway">
    <text evidence="1">Protein modification; lipoprotein biosynthesis (diacylglyceryl transfer).</text>
</comment>
<comment type="subcellular location">
    <subcellularLocation>
        <location evidence="1">Cell inner membrane</location>
        <topology evidence="1">Multi-pass membrane protein</topology>
    </subcellularLocation>
</comment>
<comment type="similarity">
    <text evidence="1">Belongs to the Lgt family.</text>
</comment>
<reference key="1">
    <citation type="journal article" date="2000" name="Science">
        <title>Complete genome sequence of Neisseria meningitidis serogroup B strain MC58.</title>
        <authorList>
            <person name="Tettelin H."/>
            <person name="Saunders N.J."/>
            <person name="Heidelberg J.F."/>
            <person name="Jeffries A.C."/>
            <person name="Nelson K.E."/>
            <person name="Eisen J.A."/>
            <person name="Ketchum K.A."/>
            <person name="Hood D.W."/>
            <person name="Peden J.F."/>
            <person name="Dodson R.J."/>
            <person name="Nelson W.C."/>
            <person name="Gwinn M.L."/>
            <person name="DeBoy R.T."/>
            <person name="Peterson J.D."/>
            <person name="Hickey E.K."/>
            <person name="Haft D.H."/>
            <person name="Salzberg S.L."/>
            <person name="White O."/>
            <person name="Fleischmann R.D."/>
            <person name="Dougherty B.A."/>
            <person name="Mason T.M."/>
            <person name="Ciecko A."/>
            <person name="Parksey D.S."/>
            <person name="Blair E."/>
            <person name="Cittone H."/>
            <person name="Clark E.B."/>
            <person name="Cotton M.D."/>
            <person name="Utterback T.R."/>
            <person name="Khouri H.M."/>
            <person name="Qin H."/>
            <person name="Vamathevan J.J."/>
            <person name="Gill J."/>
            <person name="Scarlato V."/>
            <person name="Masignani V."/>
            <person name="Pizza M."/>
            <person name="Grandi G."/>
            <person name="Sun L."/>
            <person name="Smith H.O."/>
            <person name="Fraser C.M."/>
            <person name="Moxon E.R."/>
            <person name="Rappuoli R."/>
            <person name="Venter J.C."/>
        </authorList>
    </citation>
    <scope>NUCLEOTIDE SEQUENCE [LARGE SCALE GENOMIC DNA]</scope>
    <source>
        <strain>ATCC BAA-335 / MC58</strain>
    </source>
</reference>
<protein>
    <recommendedName>
        <fullName evidence="1">Phosphatidylglycerol--prolipoprotein diacylglyceryl transferase</fullName>
        <ecNumber evidence="1">2.5.1.145</ecNumber>
    </recommendedName>
</protein>
<evidence type="ECO:0000255" key="1">
    <source>
        <dbReference type="HAMAP-Rule" id="MF_01147"/>
    </source>
</evidence>
<gene>
    <name evidence="1" type="primary">lgt</name>
    <name type="ordered locus">NMB1072</name>
</gene>
<accession>Q9JZF9</accession>
<sequence>MITHPQFDPVLISIGPLAVRWYALSYILGFILFTFLGRRRIAQGLSVFTKESLDDFLTWGILGVILGGRLGYVLFYKFSDYLAHPLDIFKVWEGGMSFHGGFLGVVIAIRLFGRKHGIGFLKLMDTVAPLVPLGLASGRIGNFINGELWGRVTDINAFWAMGFPQARYEDAEAAAHNPLWAEWLQQYGMLPRHPSQLYQFALEGICLFTVIWLFSKKQRSTGQVASLFLGGYGIFRFIAEFARQPDDYLGLLTLGLSMGQWLSVPMIVLGIVGFVRFGMKKQH</sequence>
<feature type="chain" id="PRO_0000172641" description="Phosphatidylglycerol--prolipoprotein diacylglyceryl transferase">
    <location>
        <begin position="1"/>
        <end position="283"/>
    </location>
</feature>
<feature type="transmembrane region" description="Helical" evidence="1">
    <location>
        <begin position="17"/>
        <end position="37"/>
    </location>
</feature>
<feature type="transmembrane region" description="Helical" evidence="1">
    <location>
        <begin position="56"/>
        <end position="76"/>
    </location>
</feature>
<feature type="transmembrane region" description="Helical" evidence="1">
    <location>
        <begin position="88"/>
        <end position="108"/>
    </location>
</feature>
<feature type="transmembrane region" description="Helical" evidence="1">
    <location>
        <begin position="222"/>
        <end position="242"/>
    </location>
</feature>
<feature type="transmembrane region" description="Helical" evidence="1">
    <location>
        <begin position="255"/>
        <end position="275"/>
    </location>
</feature>
<feature type="binding site" evidence="1">
    <location>
        <position position="139"/>
    </location>
    <ligand>
        <name>a 1,2-diacyl-sn-glycero-3-phospho-(1'-sn-glycerol)</name>
        <dbReference type="ChEBI" id="CHEBI:64716"/>
    </ligand>
</feature>
<organism>
    <name type="scientific">Neisseria meningitidis serogroup B (strain ATCC BAA-335 / MC58)</name>
    <dbReference type="NCBI Taxonomy" id="122586"/>
    <lineage>
        <taxon>Bacteria</taxon>
        <taxon>Pseudomonadati</taxon>
        <taxon>Pseudomonadota</taxon>
        <taxon>Betaproteobacteria</taxon>
        <taxon>Neisseriales</taxon>
        <taxon>Neisseriaceae</taxon>
        <taxon>Neisseria</taxon>
    </lineage>
</organism>
<dbReference type="EC" id="2.5.1.145" evidence="1"/>
<dbReference type="EMBL" id="AE002098">
    <property type="protein sequence ID" value="AAF41467.1"/>
    <property type="molecule type" value="Genomic_DNA"/>
</dbReference>
<dbReference type="PIR" id="C81124">
    <property type="entry name" value="C81124"/>
</dbReference>
<dbReference type="RefSeq" id="NP_274105.1">
    <property type="nucleotide sequence ID" value="NC_003112.2"/>
</dbReference>
<dbReference type="RefSeq" id="WP_002244115.1">
    <property type="nucleotide sequence ID" value="NC_003112.2"/>
</dbReference>
<dbReference type="SMR" id="Q9JZF9"/>
<dbReference type="FunCoup" id="Q9JZF9">
    <property type="interactions" value="269"/>
</dbReference>
<dbReference type="STRING" id="122586.NMB1072"/>
<dbReference type="PaxDb" id="122586-NMB1072"/>
<dbReference type="KEGG" id="nme:NMB1072"/>
<dbReference type="PATRIC" id="fig|122586.8.peg.1363"/>
<dbReference type="HOGENOM" id="CLU_013386_1_0_4"/>
<dbReference type="InParanoid" id="Q9JZF9"/>
<dbReference type="OrthoDB" id="871140at2"/>
<dbReference type="UniPathway" id="UPA00664"/>
<dbReference type="Proteomes" id="UP000000425">
    <property type="component" value="Chromosome"/>
</dbReference>
<dbReference type="GO" id="GO:0005886">
    <property type="term" value="C:plasma membrane"/>
    <property type="evidence" value="ECO:0000318"/>
    <property type="project" value="GO_Central"/>
</dbReference>
<dbReference type="GO" id="GO:0008961">
    <property type="term" value="F:phosphatidylglycerol-prolipoprotein diacylglyceryl transferase activity"/>
    <property type="evidence" value="ECO:0000318"/>
    <property type="project" value="GO_Central"/>
</dbReference>
<dbReference type="GO" id="GO:0042158">
    <property type="term" value="P:lipoprotein biosynthetic process"/>
    <property type="evidence" value="ECO:0000318"/>
    <property type="project" value="GO_Central"/>
</dbReference>
<dbReference type="HAMAP" id="MF_01147">
    <property type="entry name" value="Lgt"/>
    <property type="match status" value="1"/>
</dbReference>
<dbReference type="InterPro" id="IPR001640">
    <property type="entry name" value="Lgt"/>
</dbReference>
<dbReference type="NCBIfam" id="TIGR00544">
    <property type="entry name" value="lgt"/>
    <property type="match status" value="1"/>
</dbReference>
<dbReference type="PANTHER" id="PTHR30589:SF0">
    <property type="entry name" value="PHOSPHATIDYLGLYCEROL--PROLIPOPROTEIN DIACYLGLYCERYL TRANSFERASE"/>
    <property type="match status" value="1"/>
</dbReference>
<dbReference type="PANTHER" id="PTHR30589">
    <property type="entry name" value="PROLIPOPROTEIN DIACYLGLYCERYL TRANSFERASE"/>
    <property type="match status" value="1"/>
</dbReference>
<dbReference type="Pfam" id="PF01790">
    <property type="entry name" value="LGT"/>
    <property type="match status" value="1"/>
</dbReference>
<dbReference type="PROSITE" id="PS01311">
    <property type="entry name" value="LGT"/>
    <property type="match status" value="1"/>
</dbReference>
<keyword id="KW-0997">Cell inner membrane</keyword>
<keyword id="KW-1003">Cell membrane</keyword>
<keyword id="KW-0472">Membrane</keyword>
<keyword id="KW-1185">Reference proteome</keyword>
<keyword id="KW-0808">Transferase</keyword>
<keyword id="KW-0812">Transmembrane</keyword>
<keyword id="KW-1133">Transmembrane helix</keyword>
<name>LGT_NEIMB</name>